<comment type="function">
    <text evidence="2">Galactose (Gal) transferase involved in the synthesis of terminal N-acetyllactosamine (LacNac) unit present on glycan chains of glycoproteins and glycosphingolipids. Catalyzes the transfer of Gal residue via a beta1-&gt;4 linkage from UDP-Gal to the non-reducing terminal N-acetyl glucosamine 6-O-sulfate (6-O-sulfoGlcNAc) in the linearly growing chain of both N- and O-linked keratan sulfate proteoglycans. Cooperates with B3GNT7 N-acetyl glucosamine transferase and CHST6 and CHST1 sulfotransferases to construct and elongate mono- and disulfated disaccharide units [-&gt;3Galbeta1-&gt;4(6-sulfoGlcNAcbeta)1-&gt;] and [-&gt;3(6-sulfoGalbeta)1-&gt;4(6-sulfoGlcNAcbeta)1-&gt;] within keratan sulfate polymer. Transfers Gal residue via a beta1-&gt;4 linkage to terminal 6-O-sulfoGlcNAc within the LacNac unit of core 2 O-glycans forming 6-sulfo-sialyl-Lewis X (sLex). May contribute to the generation of sLex epitope on mucin-type glycoproteins that serve as ligands for SELL/L-selectin, a major regulator of leukocyte migration. In the biosynthesis pathway of neolacto-series glycosphingolipids, transfers Gal residue via a beta1-&gt;4 linkage to terminal GlcNAc of a lactotriaosylceramide (Lc3Cer) acceptor to form a neolactotetraosylceramide.</text>
</comment>
<comment type="catalytic activity">
    <reaction evidence="2">
        <text>N-acetyl-D-glucosamine + UDP-alpha-D-galactose = beta-D-galactosyl-(1-&gt;4)-N-acetyl-D-glucosamine + UDP + H(+)</text>
        <dbReference type="Rhea" id="RHEA:17745"/>
        <dbReference type="ChEBI" id="CHEBI:15378"/>
        <dbReference type="ChEBI" id="CHEBI:58223"/>
        <dbReference type="ChEBI" id="CHEBI:60152"/>
        <dbReference type="ChEBI" id="CHEBI:66914"/>
        <dbReference type="ChEBI" id="CHEBI:506227"/>
        <dbReference type="EC" id="2.4.1.90"/>
    </reaction>
    <physiologicalReaction direction="left-to-right" evidence="2">
        <dbReference type="Rhea" id="RHEA:17746"/>
    </physiologicalReaction>
</comment>
<comment type="catalytic activity">
    <reaction evidence="2">
        <text>a beta-D-GlcNAc-(1-&gt;3)-beta-D-Gal-(1-&gt;4)-beta-D-Glc-(1&lt;-&gt;1)-Cer(d18:1(4E)) + UDP-alpha-D-galactose = a neolactoside nLc4Cer(d18:1(4E)) + UDP + H(+)</text>
        <dbReference type="Rhea" id="RHEA:31499"/>
        <dbReference type="ChEBI" id="CHEBI:15378"/>
        <dbReference type="ChEBI" id="CHEBI:17006"/>
        <dbReference type="ChEBI" id="CHEBI:17103"/>
        <dbReference type="ChEBI" id="CHEBI:58223"/>
        <dbReference type="ChEBI" id="CHEBI:66914"/>
        <dbReference type="EC" id="2.4.1.275"/>
    </reaction>
    <physiologicalReaction direction="left-to-right" evidence="2">
        <dbReference type="Rhea" id="RHEA:31500"/>
    </physiologicalReaction>
</comment>
<comment type="catalytic activity">
    <reaction evidence="2">
        <text>3-O-{beta-D-galactosyl-(1-&gt;3)-[6-O-sulfo-N-acetyl-beta-D-glucosaminyl-(1-&gt;6)]-N-acetyl-alpha-D-galactosaminyl}-L-seryl-[protein] + UDP-alpha-D-galactose = 3-O-{beta-D-galactosyl-(1-&gt;3)-[beta-D-galactosyl-(1-&gt;4)-6-O-sulfo-N-acetyl-beta-D-glucosaminyl-(1-&gt;6)]-N-acetyl-alpha-D-galactosaminyl}-L-seryl-[protein] + UDP + H(+)</text>
        <dbReference type="Rhea" id="RHEA:67948"/>
        <dbReference type="Rhea" id="RHEA-COMP:17367"/>
        <dbReference type="Rhea" id="RHEA-COMP:17398"/>
        <dbReference type="ChEBI" id="CHEBI:15378"/>
        <dbReference type="ChEBI" id="CHEBI:58223"/>
        <dbReference type="ChEBI" id="CHEBI:66914"/>
        <dbReference type="ChEBI" id="CHEBI:176494"/>
        <dbReference type="ChEBI" id="CHEBI:176635"/>
    </reaction>
    <physiologicalReaction direction="left-to-right" evidence="2">
        <dbReference type="Rhea" id="RHEA:67949"/>
    </physiologicalReaction>
</comment>
<comment type="catalytic activity">
    <reaction evidence="2">
        <text>3-O-{beta-D-galactosyl-(1-&gt;3)-[6-O-sulfo-N-acetyl-beta-D-glucosaminyl-(1-&gt;6)]-N-acetyl-alpha-D-galactosaminyl}-L-threonyl-[protein] + UDP-alpha-D-galactose = 3-O-{beta-D-galactosyl-(1-&gt;3)-[beta-D-galactosyl-(1-&gt;4)-6-O-sulfo-N-acetyl-beta-D-glucosaminyl-(1-&gt;6)]-N-acetyl-alpha-D-galactosaminyl}-L-threonyl-[protein] + UDP + H(+)</text>
        <dbReference type="Rhea" id="RHEA:67872"/>
        <dbReference type="Rhea" id="RHEA-COMP:17370"/>
        <dbReference type="Rhea" id="RHEA-COMP:17397"/>
        <dbReference type="ChEBI" id="CHEBI:15378"/>
        <dbReference type="ChEBI" id="CHEBI:58223"/>
        <dbReference type="ChEBI" id="CHEBI:66914"/>
        <dbReference type="ChEBI" id="CHEBI:176493"/>
        <dbReference type="ChEBI" id="CHEBI:176634"/>
    </reaction>
    <physiologicalReaction direction="left-to-right" evidence="2">
        <dbReference type="Rhea" id="RHEA:67873"/>
    </physiologicalReaction>
</comment>
<comment type="cofactor">
    <cofactor evidence="1">
        <name>Mn(2+)</name>
        <dbReference type="ChEBI" id="CHEBI:29035"/>
    </cofactor>
</comment>
<comment type="pathway">
    <text evidence="2">Protein modification; protein glycosylation.</text>
</comment>
<comment type="pathway">
    <text evidence="2">Glycolipid biosynthesis.</text>
</comment>
<comment type="subunit">
    <text evidence="2">Interacts with SLC35A2/UGT1.</text>
</comment>
<comment type="subcellular location">
    <subcellularLocation>
        <location evidence="2">Golgi apparatus membrane</location>
        <topology evidence="3">Single-pass type II membrane protein</topology>
    </subcellularLocation>
    <subcellularLocation>
        <location evidence="2">Secreted</location>
    </subcellularLocation>
</comment>
<comment type="similarity">
    <text evidence="4">Belongs to the glycosyltransferase 7 family.</text>
</comment>
<feature type="chain" id="PRO_0000080544" description="Beta-1,4-galactosyltransferase 4">
    <location>
        <begin position="1"/>
        <end position="344"/>
    </location>
</feature>
<feature type="topological domain" description="Cytoplasmic" evidence="3">
    <location>
        <begin position="1"/>
        <end position="12"/>
    </location>
</feature>
<feature type="transmembrane region" description="Helical; Signal-anchor for type II membrane protein" evidence="3">
    <location>
        <begin position="13"/>
        <end position="38"/>
    </location>
</feature>
<feature type="topological domain" description="Lumenal" evidence="3">
    <location>
        <begin position="39"/>
        <end position="344"/>
    </location>
</feature>
<feature type="binding site" evidence="1">
    <location>
        <begin position="129"/>
        <end position="133"/>
    </location>
    <ligand>
        <name>UDP-alpha-D-galactose</name>
        <dbReference type="ChEBI" id="CHEBI:66914"/>
    </ligand>
</feature>
<feature type="binding site" evidence="1">
    <location>
        <begin position="168"/>
        <end position="170"/>
    </location>
    <ligand>
        <name>UDP-alpha-D-galactose</name>
        <dbReference type="ChEBI" id="CHEBI:66914"/>
    </ligand>
</feature>
<feature type="binding site" evidence="1">
    <location>
        <begin position="195"/>
        <end position="196"/>
    </location>
    <ligand>
        <name>UDP-alpha-D-galactose</name>
        <dbReference type="ChEBI" id="CHEBI:66914"/>
    </ligand>
</feature>
<feature type="binding site" evidence="1">
    <location>
        <position position="196"/>
    </location>
    <ligand>
        <name>Mn(2+)</name>
        <dbReference type="ChEBI" id="CHEBI:29035"/>
    </ligand>
</feature>
<feature type="binding site" evidence="1">
    <location>
        <position position="224"/>
    </location>
    <ligand>
        <name>UDP-alpha-D-galactose</name>
        <dbReference type="ChEBI" id="CHEBI:66914"/>
    </ligand>
</feature>
<feature type="binding site" evidence="1">
    <location>
        <position position="256"/>
    </location>
    <ligand>
        <name>UDP-alpha-D-galactose</name>
        <dbReference type="ChEBI" id="CHEBI:66914"/>
    </ligand>
</feature>
<feature type="binding site" evidence="1">
    <location>
        <begin position="258"/>
        <end position="261"/>
    </location>
    <ligand>
        <name>N-acetyl-D-glucosamine</name>
        <dbReference type="ChEBI" id="CHEBI:506227"/>
    </ligand>
</feature>
<feature type="binding site" evidence="1">
    <location>
        <begin position="289"/>
        <end position="291"/>
    </location>
    <ligand>
        <name>UDP-alpha-D-galactose</name>
        <dbReference type="ChEBI" id="CHEBI:66914"/>
    </ligand>
</feature>
<feature type="binding site" evidence="1">
    <location>
        <position position="289"/>
    </location>
    <ligand>
        <name>Mn(2+)</name>
        <dbReference type="ChEBI" id="CHEBI:29035"/>
    </ligand>
</feature>
<feature type="binding site" evidence="1">
    <location>
        <position position="301"/>
    </location>
    <ligand>
        <name>N-acetyl-D-glucosamine</name>
        <dbReference type="ChEBI" id="CHEBI:506227"/>
    </ligand>
</feature>
<feature type="glycosylation site" description="N-linked (GlcNAc...) asparagine" evidence="3">
    <location>
        <position position="220"/>
    </location>
</feature>
<feature type="glycosylation site" description="N-linked (GlcNAc...) asparagine" evidence="3">
    <location>
        <position position="335"/>
    </location>
</feature>
<feature type="disulfide bond" evidence="1">
    <location>
        <begin position="77"/>
        <end position="118"/>
    </location>
</feature>
<feature type="disulfide bond" evidence="1">
    <location>
        <begin position="189"/>
        <end position="208"/>
    </location>
</feature>
<keyword id="KW-1015">Disulfide bond</keyword>
<keyword id="KW-0325">Glycoprotein</keyword>
<keyword id="KW-0328">Glycosyltransferase</keyword>
<keyword id="KW-0333">Golgi apparatus</keyword>
<keyword id="KW-0443">Lipid metabolism</keyword>
<keyword id="KW-0464">Manganese</keyword>
<keyword id="KW-0472">Membrane</keyword>
<keyword id="KW-0479">Metal-binding</keyword>
<keyword id="KW-1185">Reference proteome</keyword>
<keyword id="KW-0964">Secreted</keyword>
<keyword id="KW-0735">Signal-anchor</keyword>
<keyword id="KW-0808">Transferase</keyword>
<keyword id="KW-0812">Transmembrane</keyword>
<keyword id="KW-1133">Transmembrane helix</keyword>
<protein>
    <recommendedName>
        <fullName>Beta-1,4-galactosyltransferase 4</fullName>
        <shortName>Beta-1,4-GalTase 4</shortName>
        <shortName>Beta4Gal-T4</shortName>
        <shortName>b4Gal-T4</shortName>
        <ecNumber evidence="2">2.4.1.-</ecNumber>
    </recommendedName>
    <alternativeName>
        <fullName>Beta-N-acetylglucosaminyl-glycolipid beta-1,4-galactosyltransferase</fullName>
    </alternativeName>
    <alternativeName>
        <fullName>Lactotriaosylceramide beta-1,4-galactosyltransferase</fullName>
        <ecNumber evidence="2">2.4.1.275</ecNumber>
    </alternativeName>
    <alternativeName>
        <fullName>N-acetyllactosamine synthase</fullName>
        <ecNumber evidence="2">2.4.1.90</ecNumber>
    </alternativeName>
    <alternativeName>
        <fullName>Nal synthase</fullName>
    </alternativeName>
    <alternativeName>
        <fullName>UDP-Gal:beta-GlcNAc beta-1,4-galactosyltransferase 4</fullName>
    </alternativeName>
    <alternativeName>
        <fullName>UDP-galactose:beta-N-acetylglucosamine beta-1,4-galactosyltransferase 4</fullName>
    </alternativeName>
</protein>
<proteinExistence type="evidence at transcript level"/>
<evidence type="ECO:0000250" key="1"/>
<evidence type="ECO:0000250" key="2">
    <source>
        <dbReference type="UniProtKB" id="O60513"/>
    </source>
</evidence>
<evidence type="ECO:0000255" key="3"/>
<evidence type="ECO:0000305" key="4"/>
<name>B4GT4_RAT</name>
<accession>Q66HH1</accession>
<reference key="1">
    <citation type="journal article" date="2004" name="Genome Res.">
        <title>The status, quality, and expansion of the NIH full-length cDNA project: the Mammalian Gene Collection (MGC).</title>
        <authorList>
            <consortium name="The MGC Project Team"/>
        </authorList>
    </citation>
    <scope>NUCLEOTIDE SEQUENCE [LARGE SCALE MRNA]</scope>
    <source>
        <tissue>Lung</tissue>
    </source>
</reference>
<sequence length="344" mass="39707">MGCNPPYLLSYRLRLLLLFTLCLTVLGWATSNYFVGAIQVIPRAKNFMATLHKVMYLGNEETLGHGAAMKKAELANCPSVSPNLRGQNKLVFKPDLTLEEVQAKNPKVSRGRYRPEECKALQRVAVLIPHRNREKHLIYLLEHLHPFLQRQQLDYGIYVIHQTGSKKFNRAKLLNVGYLEALKEENWDCFIFHDVDLVPENDFNLYTCGDQPKHLVVGRNSTGYRLRYSKYFGGVTALSREQFFKVNGFSNNYWGWGGEDDDLRLRVELHKMKISRPKPDVGKYTMIFHTRDKGNEVNGSRMKLLQQMSRVWKTDGLSSCSYRLLSVEHNPLYANITVDFWTAA</sequence>
<gene>
    <name type="primary">B4galt4</name>
</gene>
<organism>
    <name type="scientific">Rattus norvegicus</name>
    <name type="common">Rat</name>
    <dbReference type="NCBI Taxonomy" id="10116"/>
    <lineage>
        <taxon>Eukaryota</taxon>
        <taxon>Metazoa</taxon>
        <taxon>Chordata</taxon>
        <taxon>Craniata</taxon>
        <taxon>Vertebrata</taxon>
        <taxon>Euteleostomi</taxon>
        <taxon>Mammalia</taxon>
        <taxon>Eutheria</taxon>
        <taxon>Euarchontoglires</taxon>
        <taxon>Glires</taxon>
        <taxon>Rodentia</taxon>
        <taxon>Myomorpha</taxon>
        <taxon>Muroidea</taxon>
        <taxon>Muridae</taxon>
        <taxon>Murinae</taxon>
        <taxon>Rattus</taxon>
    </lineage>
</organism>
<dbReference type="EC" id="2.4.1.-" evidence="2"/>
<dbReference type="EC" id="2.4.1.275" evidence="2"/>
<dbReference type="EC" id="2.4.1.90" evidence="2"/>
<dbReference type="EMBL" id="BC081866">
    <property type="protein sequence ID" value="AAH81866.1"/>
    <property type="molecule type" value="mRNA"/>
</dbReference>
<dbReference type="RefSeq" id="NP_001012018.1">
    <property type="nucleotide sequence ID" value="NM_001012018.1"/>
</dbReference>
<dbReference type="RefSeq" id="XP_017453489.1">
    <property type="nucleotide sequence ID" value="XM_017598000.3"/>
</dbReference>
<dbReference type="SMR" id="Q66HH1"/>
<dbReference type="FunCoup" id="Q66HH1">
    <property type="interactions" value="1907"/>
</dbReference>
<dbReference type="STRING" id="10116.ENSRNOP00000004289"/>
<dbReference type="CAZy" id="GT7">
    <property type="family name" value="Glycosyltransferase Family 7"/>
</dbReference>
<dbReference type="GlyCosmos" id="Q66HH1">
    <property type="glycosylation" value="2 sites, No reported glycans"/>
</dbReference>
<dbReference type="GlyGen" id="Q66HH1">
    <property type="glycosylation" value="2 sites"/>
</dbReference>
<dbReference type="PhosphoSitePlus" id="Q66HH1"/>
<dbReference type="PaxDb" id="10116-ENSRNOP00000004289"/>
<dbReference type="Ensembl" id="ENSRNOT00000004289.7">
    <property type="protein sequence ID" value="ENSRNOP00000004289.4"/>
    <property type="gene ID" value="ENSRNOG00000003114.7"/>
</dbReference>
<dbReference type="GeneID" id="303923"/>
<dbReference type="KEGG" id="rno:303923"/>
<dbReference type="UCSC" id="RGD:1307880">
    <property type="organism name" value="rat"/>
</dbReference>
<dbReference type="AGR" id="RGD:1307880"/>
<dbReference type="CTD" id="8702"/>
<dbReference type="RGD" id="1307880">
    <property type="gene designation" value="B4galt4"/>
</dbReference>
<dbReference type="eggNOG" id="KOG3916">
    <property type="taxonomic scope" value="Eukaryota"/>
</dbReference>
<dbReference type="GeneTree" id="ENSGT00940000158378"/>
<dbReference type="HOGENOM" id="CLU_044391_1_0_1"/>
<dbReference type="InParanoid" id="Q66HH1"/>
<dbReference type="OMA" id="TSNYFVD"/>
<dbReference type="OrthoDB" id="10016069at2759"/>
<dbReference type="PhylomeDB" id="Q66HH1"/>
<dbReference type="TreeFam" id="TF312834"/>
<dbReference type="Reactome" id="R-RNO-2022854">
    <property type="pathway name" value="Keratan sulfate biosynthesis"/>
</dbReference>
<dbReference type="Reactome" id="R-RNO-975577">
    <property type="pathway name" value="N-Glycan antennae elongation"/>
</dbReference>
<dbReference type="UniPathway" id="UPA00378"/>
<dbReference type="PRO" id="PR:Q66HH1"/>
<dbReference type="Proteomes" id="UP000002494">
    <property type="component" value="Chromosome 11"/>
</dbReference>
<dbReference type="Bgee" id="ENSRNOG00000003114">
    <property type="expression patterns" value="Expressed in duodenum and 18 other cell types or tissues"/>
</dbReference>
<dbReference type="GO" id="GO:0005576">
    <property type="term" value="C:extracellular region"/>
    <property type="evidence" value="ECO:0007669"/>
    <property type="project" value="UniProtKB-SubCell"/>
</dbReference>
<dbReference type="GO" id="GO:0005794">
    <property type="term" value="C:Golgi apparatus"/>
    <property type="evidence" value="ECO:0000318"/>
    <property type="project" value="GO_Central"/>
</dbReference>
<dbReference type="GO" id="GO:0000139">
    <property type="term" value="C:Golgi membrane"/>
    <property type="evidence" value="ECO:0000250"/>
    <property type="project" value="UniProtKB"/>
</dbReference>
<dbReference type="GO" id="GO:0008378">
    <property type="term" value="F:galactosyltransferase activity"/>
    <property type="evidence" value="ECO:0000318"/>
    <property type="project" value="GO_Central"/>
</dbReference>
<dbReference type="GO" id="GO:0046872">
    <property type="term" value="F:metal ion binding"/>
    <property type="evidence" value="ECO:0007669"/>
    <property type="project" value="UniProtKB-KW"/>
</dbReference>
<dbReference type="GO" id="GO:0003945">
    <property type="term" value="F:N-acetyllactosamine synthase activity"/>
    <property type="evidence" value="ECO:0000250"/>
    <property type="project" value="UniProtKB"/>
</dbReference>
<dbReference type="GO" id="GO:0035250">
    <property type="term" value="F:UDP-galactosyltransferase activity"/>
    <property type="evidence" value="ECO:0000250"/>
    <property type="project" value="UniProtKB"/>
</dbReference>
<dbReference type="GO" id="GO:0005975">
    <property type="term" value="P:carbohydrate metabolic process"/>
    <property type="evidence" value="ECO:0007669"/>
    <property type="project" value="InterPro"/>
</dbReference>
<dbReference type="GO" id="GO:0070085">
    <property type="term" value="P:glycosylation"/>
    <property type="evidence" value="ECO:0000318"/>
    <property type="project" value="GO_Central"/>
</dbReference>
<dbReference type="GO" id="GO:0018146">
    <property type="term" value="P:keratan sulfate proteoglycan biosynthetic process"/>
    <property type="evidence" value="ECO:0000250"/>
    <property type="project" value="UniProtKB"/>
</dbReference>
<dbReference type="GO" id="GO:0001572">
    <property type="term" value="P:lactosylceramide biosynthetic process"/>
    <property type="evidence" value="ECO:0000250"/>
    <property type="project" value="UniProtKB"/>
</dbReference>
<dbReference type="GO" id="GO:0006486">
    <property type="term" value="P:protein glycosylation"/>
    <property type="evidence" value="ECO:0007669"/>
    <property type="project" value="UniProtKB-UniPathway"/>
</dbReference>
<dbReference type="CDD" id="cd00899">
    <property type="entry name" value="b4GalT"/>
    <property type="match status" value="1"/>
</dbReference>
<dbReference type="FunFam" id="3.90.550.10:FF:000028">
    <property type="entry name" value="beta-1,4-galactosyltransferase 1"/>
    <property type="match status" value="1"/>
</dbReference>
<dbReference type="Gene3D" id="3.90.550.10">
    <property type="entry name" value="Spore Coat Polysaccharide Biosynthesis Protein SpsA, Chain A"/>
    <property type="match status" value="1"/>
</dbReference>
<dbReference type="InterPro" id="IPR003859">
    <property type="entry name" value="Galactosyl_T"/>
</dbReference>
<dbReference type="InterPro" id="IPR027791">
    <property type="entry name" value="Galactosyl_T_C"/>
</dbReference>
<dbReference type="InterPro" id="IPR027995">
    <property type="entry name" value="Galactosyl_T_N"/>
</dbReference>
<dbReference type="InterPro" id="IPR029044">
    <property type="entry name" value="Nucleotide-diphossugar_trans"/>
</dbReference>
<dbReference type="PANTHER" id="PTHR19300">
    <property type="entry name" value="BETA-1,4-GALACTOSYLTRANSFERASE"/>
    <property type="match status" value="1"/>
</dbReference>
<dbReference type="PANTHER" id="PTHR19300:SF9">
    <property type="entry name" value="BETA-1,4-GALACTOSYLTRANSFERASE 4"/>
    <property type="match status" value="1"/>
</dbReference>
<dbReference type="Pfam" id="PF02709">
    <property type="entry name" value="Glyco_transf_7C"/>
    <property type="match status" value="1"/>
</dbReference>
<dbReference type="Pfam" id="PF13733">
    <property type="entry name" value="Glyco_transf_7N"/>
    <property type="match status" value="1"/>
</dbReference>
<dbReference type="PRINTS" id="PR02050">
    <property type="entry name" value="B14GALTRFASE"/>
</dbReference>
<dbReference type="SUPFAM" id="SSF53448">
    <property type="entry name" value="Nucleotide-diphospho-sugar transferases"/>
    <property type="match status" value="1"/>
</dbReference>